<organism>
    <name type="scientific">Pseudomonas entomophila (strain L48)</name>
    <dbReference type="NCBI Taxonomy" id="384676"/>
    <lineage>
        <taxon>Bacteria</taxon>
        <taxon>Pseudomonadati</taxon>
        <taxon>Pseudomonadota</taxon>
        <taxon>Gammaproteobacteria</taxon>
        <taxon>Pseudomonadales</taxon>
        <taxon>Pseudomonadaceae</taxon>
        <taxon>Pseudomonas</taxon>
    </lineage>
</organism>
<name>RL35_PSEE4</name>
<dbReference type="EMBL" id="CT573326">
    <property type="protein sequence ID" value="CAK14800.1"/>
    <property type="molecule type" value="Genomic_DNA"/>
</dbReference>
<dbReference type="RefSeq" id="WP_003250667.1">
    <property type="nucleotide sequence ID" value="NC_008027.1"/>
</dbReference>
<dbReference type="SMR" id="Q1IC13"/>
<dbReference type="STRING" id="384676.PSEEN1965"/>
<dbReference type="GeneID" id="97167548"/>
<dbReference type="KEGG" id="pen:PSEEN1965"/>
<dbReference type="eggNOG" id="COG0291">
    <property type="taxonomic scope" value="Bacteria"/>
</dbReference>
<dbReference type="HOGENOM" id="CLU_169643_1_1_6"/>
<dbReference type="OrthoDB" id="47476at2"/>
<dbReference type="Proteomes" id="UP000000658">
    <property type="component" value="Chromosome"/>
</dbReference>
<dbReference type="GO" id="GO:0022625">
    <property type="term" value="C:cytosolic large ribosomal subunit"/>
    <property type="evidence" value="ECO:0007669"/>
    <property type="project" value="TreeGrafter"/>
</dbReference>
<dbReference type="GO" id="GO:0003735">
    <property type="term" value="F:structural constituent of ribosome"/>
    <property type="evidence" value="ECO:0007669"/>
    <property type="project" value="InterPro"/>
</dbReference>
<dbReference type="GO" id="GO:0006412">
    <property type="term" value="P:translation"/>
    <property type="evidence" value="ECO:0007669"/>
    <property type="project" value="UniProtKB-UniRule"/>
</dbReference>
<dbReference type="FunFam" id="4.10.410.60:FF:000001">
    <property type="entry name" value="50S ribosomal protein L35"/>
    <property type="match status" value="1"/>
</dbReference>
<dbReference type="Gene3D" id="4.10.410.60">
    <property type="match status" value="1"/>
</dbReference>
<dbReference type="HAMAP" id="MF_00514">
    <property type="entry name" value="Ribosomal_bL35"/>
    <property type="match status" value="1"/>
</dbReference>
<dbReference type="InterPro" id="IPR001706">
    <property type="entry name" value="Ribosomal_bL35"/>
</dbReference>
<dbReference type="InterPro" id="IPR021137">
    <property type="entry name" value="Ribosomal_bL35-like"/>
</dbReference>
<dbReference type="InterPro" id="IPR018265">
    <property type="entry name" value="Ribosomal_bL35_CS"/>
</dbReference>
<dbReference type="InterPro" id="IPR037229">
    <property type="entry name" value="Ribosomal_bL35_sf"/>
</dbReference>
<dbReference type="NCBIfam" id="TIGR00001">
    <property type="entry name" value="rpmI_bact"/>
    <property type="match status" value="1"/>
</dbReference>
<dbReference type="PANTHER" id="PTHR33343">
    <property type="entry name" value="54S RIBOSOMAL PROTEIN BL35M"/>
    <property type="match status" value="1"/>
</dbReference>
<dbReference type="PANTHER" id="PTHR33343:SF1">
    <property type="entry name" value="LARGE RIBOSOMAL SUBUNIT PROTEIN BL35M"/>
    <property type="match status" value="1"/>
</dbReference>
<dbReference type="Pfam" id="PF01632">
    <property type="entry name" value="Ribosomal_L35p"/>
    <property type="match status" value="1"/>
</dbReference>
<dbReference type="PRINTS" id="PR00064">
    <property type="entry name" value="RIBOSOMALL35"/>
</dbReference>
<dbReference type="SUPFAM" id="SSF143034">
    <property type="entry name" value="L35p-like"/>
    <property type="match status" value="1"/>
</dbReference>
<dbReference type="PROSITE" id="PS00936">
    <property type="entry name" value="RIBOSOMAL_L35"/>
    <property type="match status" value="1"/>
</dbReference>
<reference key="1">
    <citation type="journal article" date="2006" name="Nat. Biotechnol.">
        <title>Complete genome sequence of the entomopathogenic and metabolically versatile soil bacterium Pseudomonas entomophila.</title>
        <authorList>
            <person name="Vodovar N."/>
            <person name="Vallenet D."/>
            <person name="Cruveiller S."/>
            <person name="Rouy Z."/>
            <person name="Barbe V."/>
            <person name="Acosta C."/>
            <person name="Cattolico L."/>
            <person name="Jubin C."/>
            <person name="Lajus A."/>
            <person name="Segurens B."/>
            <person name="Vacherie B."/>
            <person name="Wincker P."/>
            <person name="Weissenbach J."/>
            <person name="Lemaitre B."/>
            <person name="Medigue C."/>
            <person name="Boccard F."/>
        </authorList>
    </citation>
    <scope>NUCLEOTIDE SEQUENCE [LARGE SCALE GENOMIC DNA]</scope>
    <source>
        <strain>L48</strain>
    </source>
</reference>
<keyword id="KW-0687">Ribonucleoprotein</keyword>
<keyword id="KW-0689">Ribosomal protein</keyword>
<gene>
    <name evidence="1" type="primary">rpmI</name>
    <name type="ordered locus">PSEEN1965</name>
</gene>
<feature type="chain" id="PRO_1000050746" description="Large ribosomal subunit protein bL35">
    <location>
        <begin position="1"/>
        <end position="64"/>
    </location>
</feature>
<comment type="similarity">
    <text evidence="1">Belongs to the bacterial ribosomal protein bL35 family.</text>
</comment>
<protein>
    <recommendedName>
        <fullName evidence="1">Large ribosomal subunit protein bL35</fullName>
    </recommendedName>
    <alternativeName>
        <fullName evidence="2">50S ribosomal protein L35</fullName>
    </alternativeName>
</protein>
<evidence type="ECO:0000255" key="1">
    <source>
        <dbReference type="HAMAP-Rule" id="MF_00514"/>
    </source>
</evidence>
<evidence type="ECO:0000305" key="2"/>
<sequence length="64" mass="7345">MPKMKTKSGAAKRFLKTASGFKHKHAFKSHILTKMSTKRKRQLRGASLLHPSDVAKVERMLRVR</sequence>
<accession>Q1IC13</accession>
<proteinExistence type="inferred from homology"/>